<organism>
    <name type="scientific">Ralstonia nicotianae (strain ATCC BAA-1114 / GMI1000)</name>
    <name type="common">Ralstonia solanacearum</name>
    <dbReference type="NCBI Taxonomy" id="267608"/>
    <lineage>
        <taxon>Bacteria</taxon>
        <taxon>Pseudomonadati</taxon>
        <taxon>Pseudomonadota</taxon>
        <taxon>Betaproteobacteria</taxon>
        <taxon>Burkholderiales</taxon>
        <taxon>Burkholderiaceae</taxon>
        <taxon>Ralstonia</taxon>
        <taxon>Ralstonia solanacearum species complex</taxon>
    </lineage>
</organism>
<feature type="chain" id="PRO_0000075607" description="2-C-methyl-D-erythritol 4-phosphate cytidylyltransferase">
    <location>
        <begin position="1"/>
        <end position="253"/>
    </location>
</feature>
<feature type="region of interest" description="Disordered" evidence="2">
    <location>
        <begin position="1"/>
        <end position="28"/>
    </location>
</feature>
<feature type="site" description="Transition state stabilizer" evidence="1">
    <location>
        <position position="23"/>
    </location>
</feature>
<feature type="site" description="Transition state stabilizer" evidence="1">
    <location>
        <position position="30"/>
    </location>
</feature>
<feature type="site" description="Positions MEP for the nucleophilic attack" evidence="1">
    <location>
        <position position="171"/>
    </location>
</feature>
<feature type="site" description="Positions MEP for the nucleophilic attack" evidence="1">
    <location>
        <position position="227"/>
    </location>
</feature>
<comment type="function">
    <text evidence="1">Catalyzes the formation of 4-diphosphocytidyl-2-C-methyl-D-erythritol from CTP and 2-C-methyl-D-erythritol 4-phosphate (MEP).</text>
</comment>
<comment type="catalytic activity">
    <reaction evidence="1">
        <text>2-C-methyl-D-erythritol 4-phosphate + CTP + H(+) = 4-CDP-2-C-methyl-D-erythritol + diphosphate</text>
        <dbReference type="Rhea" id="RHEA:13429"/>
        <dbReference type="ChEBI" id="CHEBI:15378"/>
        <dbReference type="ChEBI" id="CHEBI:33019"/>
        <dbReference type="ChEBI" id="CHEBI:37563"/>
        <dbReference type="ChEBI" id="CHEBI:57823"/>
        <dbReference type="ChEBI" id="CHEBI:58262"/>
        <dbReference type="EC" id="2.7.7.60"/>
    </reaction>
</comment>
<comment type="pathway">
    <text evidence="1">Isoprenoid biosynthesis; isopentenyl diphosphate biosynthesis via DXP pathway; isopentenyl diphosphate from 1-deoxy-D-xylulose 5-phosphate: step 2/6.</text>
</comment>
<comment type="similarity">
    <text evidence="1">Belongs to the IspD/TarI cytidylyltransferase family. IspD subfamily.</text>
</comment>
<reference key="1">
    <citation type="journal article" date="2002" name="Nature">
        <title>Genome sequence of the plant pathogen Ralstonia solanacearum.</title>
        <authorList>
            <person name="Salanoubat M."/>
            <person name="Genin S."/>
            <person name="Artiguenave F."/>
            <person name="Gouzy J."/>
            <person name="Mangenot S."/>
            <person name="Arlat M."/>
            <person name="Billault A."/>
            <person name="Brottier P."/>
            <person name="Camus J.-C."/>
            <person name="Cattolico L."/>
            <person name="Chandler M."/>
            <person name="Choisne N."/>
            <person name="Claudel-Renard C."/>
            <person name="Cunnac S."/>
            <person name="Demange N."/>
            <person name="Gaspin C."/>
            <person name="Lavie M."/>
            <person name="Moisan A."/>
            <person name="Robert C."/>
            <person name="Saurin W."/>
            <person name="Schiex T."/>
            <person name="Siguier P."/>
            <person name="Thebault P."/>
            <person name="Whalen M."/>
            <person name="Wincker P."/>
            <person name="Levy M."/>
            <person name="Weissenbach J."/>
            <person name="Boucher C.A."/>
        </authorList>
    </citation>
    <scope>NUCLEOTIDE SEQUENCE [LARGE SCALE GENOMIC DNA]</scope>
    <source>
        <strain>ATCC BAA-1114 / GMI1000</strain>
    </source>
</reference>
<name>ISPD_RALN1</name>
<protein>
    <recommendedName>
        <fullName evidence="1">2-C-methyl-D-erythritol 4-phosphate cytidylyltransferase</fullName>
        <ecNumber evidence="1">2.7.7.60</ecNumber>
    </recommendedName>
    <alternativeName>
        <fullName evidence="1">4-diphosphocytidyl-2C-methyl-D-erythritol synthase</fullName>
    </alternativeName>
    <alternativeName>
        <fullName evidence="1">MEP cytidylyltransferase</fullName>
        <shortName evidence="1">MCT</shortName>
    </alternativeName>
</protein>
<dbReference type="EC" id="2.7.7.60" evidence="1"/>
<dbReference type="EMBL" id="AL646052">
    <property type="protein sequence ID" value="CAD15345.1"/>
    <property type="molecule type" value="Genomic_DNA"/>
</dbReference>
<dbReference type="RefSeq" id="WP_011001585.1">
    <property type="nucleotide sequence ID" value="NC_003295.1"/>
</dbReference>
<dbReference type="SMR" id="Q8XYW3"/>
<dbReference type="STRING" id="267608.RSc1643"/>
<dbReference type="EnsemblBacteria" id="CAD15345">
    <property type="protein sequence ID" value="CAD15345"/>
    <property type="gene ID" value="RSc1643"/>
</dbReference>
<dbReference type="KEGG" id="rso:RSc1643"/>
<dbReference type="eggNOG" id="COG1211">
    <property type="taxonomic scope" value="Bacteria"/>
</dbReference>
<dbReference type="HOGENOM" id="CLU_061281_3_0_4"/>
<dbReference type="UniPathway" id="UPA00056">
    <property type="reaction ID" value="UER00093"/>
</dbReference>
<dbReference type="Proteomes" id="UP000001436">
    <property type="component" value="Chromosome"/>
</dbReference>
<dbReference type="GO" id="GO:0050518">
    <property type="term" value="F:2-C-methyl-D-erythritol 4-phosphate cytidylyltransferase activity"/>
    <property type="evidence" value="ECO:0007669"/>
    <property type="project" value="UniProtKB-UniRule"/>
</dbReference>
<dbReference type="GO" id="GO:0019288">
    <property type="term" value="P:isopentenyl diphosphate biosynthetic process, methylerythritol 4-phosphate pathway"/>
    <property type="evidence" value="ECO:0007669"/>
    <property type="project" value="UniProtKB-UniRule"/>
</dbReference>
<dbReference type="CDD" id="cd02516">
    <property type="entry name" value="CDP-ME_synthetase"/>
    <property type="match status" value="1"/>
</dbReference>
<dbReference type="FunFam" id="3.90.550.10:FF:000003">
    <property type="entry name" value="2-C-methyl-D-erythritol 4-phosphate cytidylyltransferase"/>
    <property type="match status" value="1"/>
</dbReference>
<dbReference type="Gene3D" id="3.90.550.10">
    <property type="entry name" value="Spore Coat Polysaccharide Biosynthesis Protein SpsA, Chain A"/>
    <property type="match status" value="1"/>
</dbReference>
<dbReference type="HAMAP" id="MF_00108">
    <property type="entry name" value="IspD"/>
    <property type="match status" value="1"/>
</dbReference>
<dbReference type="InterPro" id="IPR001228">
    <property type="entry name" value="IspD"/>
</dbReference>
<dbReference type="InterPro" id="IPR034683">
    <property type="entry name" value="IspD/TarI"/>
</dbReference>
<dbReference type="InterPro" id="IPR050088">
    <property type="entry name" value="IspD/TarI_cytidylyltransf_bact"/>
</dbReference>
<dbReference type="InterPro" id="IPR018294">
    <property type="entry name" value="ISPD_synthase_CS"/>
</dbReference>
<dbReference type="InterPro" id="IPR029044">
    <property type="entry name" value="Nucleotide-diphossugar_trans"/>
</dbReference>
<dbReference type="NCBIfam" id="TIGR00453">
    <property type="entry name" value="ispD"/>
    <property type="match status" value="1"/>
</dbReference>
<dbReference type="PANTHER" id="PTHR32125">
    <property type="entry name" value="2-C-METHYL-D-ERYTHRITOL 4-PHOSPHATE CYTIDYLYLTRANSFERASE, CHLOROPLASTIC"/>
    <property type="match status" value="1"/>
</dbReference>
<dbReference type="PANTHER" id="PTHR32125:SF4">
    <property type="entry name" value="2-C-METHYL-D-ERYTHRITOL 4-PHOSPHATE CYTIDYLYLTRANSFERASE, CHLOROPLASTIC"/>
    <property type="match status" value="1"/>
</dbReference>
<dbReference type="Pfam" id="PF01128">
    <property type="entry name" value="IspD"/>
    <property type="match status" value="1"/>
</dbReference>
<dbReference type="SUPFAM" id="SSF53448">
    <property type="entry name" value="Nucleotide-diphospho-sugar transferases"/>
    <property type="match status" value="1"/>
</dbReference>
<dbReference type="PROSITE" id="PS01295">
    <property type="entry name" value="ISPD"/>
    <property type="match status" value="1"/>
</dbReference>
<keyword id="KW-0414">Isoprene biosynthesis</keyword>
<keyword id="KW-0548">Nucleotidyltransferase</keyword>
<keyword id="KW-1185">Reference proteome</keyword>
<keyword id="KW-0808">Transferase</keyword>
<proteinExistence type="inferred from homology"/>
<accession>Q8XYW3</accession>
<evidence type="ECO:0000255" key="1">
    <source>
        <dbReference type="HAMAP-Rule" id="MF_00108"/>
    </source>
</evidence>
<evidence type="ECO:0000256" key="2">
    <source>
        <dbReference type="SAM" id="MobiDB-lite"/>
    </source>
</evidence>
<sequence length="253" mass="26134">MSVSSRPGRRRFALIPSAGTGTRAGGDLPKQYQPLAGRPMLWHTVQAFLASAAIDRVVVVTSPGAPALAARFPGLGFDAARLVEVDCGGDSRHASVTNGLAALRGLGAHEDDWVLVHDAARPGLTPALIARLVGAVEADGGQAVGGILALPVADTLKRADAGQHIAETVPRGGLWQAQTPQMFPLGLLQRALSEALTAQRIVTDEASAIEAAGHRPLLVAGALRNFKVTYPDDFALAEAILAGAAPTQEDSQA</sequence>
<gene>
    <name evidence="1" type="primary">ispD</name>
    <name type="ordered locus">RSc1643</name>
    <name type="ORF">RS04018</name>
</gene>